<keyword id="KW-0030">Aminoacyl-tRNA synthetase</keyword>
<keyword id="KW-0067">ATP-binding</keyword>
<keyword id="KW-0963">Cytoplasm</keyword>
<keyword id="KW-0436">Ligase</keyword>
<keyword id="KW-0460">Magnesium</keyword>
<keyword id="KW-0479">Metal-binding</keyword>
<keyword id="KW-0547">Nucleotide-binding</keyword>
<keyword id="KW-0648">Protein biosynthesis</keyword>
<comment type="catalytic activity">
    <reaction evidence="1">
        <text>tRNA(Phe) + L-phenylalanine + ATP = L-phenylalanyl-tRNA(Phe) + AMP + diphosphate + H(+)</text>
        <dbReference type="Rhea" id="RHEA:19413"/>
        <dbReference type="Rhea" id="RHEA-COMP:9668"/>
        <dbReference type="Rhea" id="RHEA-COMP:9699"/>
        <dbReference type="ChEBI" id="CHEBI:15378"/>
        <dbReference type="ChEBI" id="CHEBI:30616"/>
        <dbReference type="ChEBI" id="CHEBI:33019"/>
        <dbReference type="ChEBI" id="CHEBI:58095"/>
        <dbReference type="ChEBI" id="CHEBI:78442"/>
        <dbReference type="ChEBI" id="CHEBI:78531"/>
        <dbReference type="ChEBI" id="CHEBI:456215"/>
        <dbReference type="EC" id="6.1.1.20"/>
    </reaction>
</comment>
<comment type="cofactor">
    <cofactor evidence="1">
        <name>Mg(2+)</name>
        <dbReference type="ChEBI" id="CHEBI:18420"/>
    </cofactor>
</comment>
<comment type="subunit">
    <text evidence="1">Tetramer of two alpha and two beta subunits.</text>
</comment>
<comment type="subcellular location">
    <subcellularLocation>
        <location evidence="1">Cytoplasm</location>
    </subcellularLocation>
</comment>
<comment type="similarity">
    <text evidence="1">Belongs to the phenylalanyl-tRNA synthetase beta subunit family. Type 2 subfamily.</text>
</comment>
<protein>
    <recommendedName>
        <fullName evidence="1">Phenylalanine--tRNA ligase beta subunit</fullName>
        <ecNumber evidence="1">6.1.1.20</ecNumber>
    </recommendedName>
    <alternativeName>
        <fullName evidence="1">Phenylalanyl-tRNA synthetase beta subunit</fullName>
        <shortName evidence="1">PheRS</shortName>
    </alternativeName>
</protein>
<gene>
    <name evidence="1" type="primary">pheT</name>
    <name type="ordered locus">OE_4507F</name>
</gene>
<reference key="1">
    <citation type="journal article" date="2008" name="Genomics">
        <title>Evolution in the laboratory: the genome of Halobacterium salinarum strain R1 compared to that of strain NRC-1.</title>
        <authorList>
            <person name="Pfeiffer F."/>
            <person name="Schuster S.C."/>
            <person name="Broicher A."/>
            <person name="Falb M."/>
            <person name="Palm P."/>
            <person name="Rodewald K."/>
            <person name="Ruepp A."/>
            <person name="Soppa J."/>
            <person name="Tittor J."/>
            <person name="Oesterhelt D."/>
        </authorList>
    </citation>
    <scope>NUCLEOTIDE SEQUENCE [LARGE SCALE GENOMIC DNA]</scope>
    <source>
        <strain>ATCC 29341 / DSM 671 / R1</strain>
    </source>
</reference>
<dbReference type="EC" id="6.1.1.20" evidence="1"/>
<dbReference type="EMBL" id="AM774415">
    <property type="protein sequence ID" value="CAP14876.1"/>
    <property type="molecule type" value="Genomic_DNA"/>
</dbReference>
<dbReference type="RefSeq" id="WP_010903870.1">
    <property type="nucleotide sequence ID" value="NC_010364.1"/>
</dbReference>
<dbReference type="SMR" id="B0R807"/>
<dbReference type="EnsemblBacteria" id="CAP14876">
    <property type="protein sequence ID" value="CAP14876"/>
    <property type="gene ID" value="OE_4507F"/>
</dbReference>
<dbReference type="GeneID" id="89348501"/>
<dbReference type="KEGG" id="hsl:OE_4507F"/>
<dbReference type="HOGENOM" id="CLU_020279_3_0_2"/>
<dbReference type="PhylomeDB" id="B0R807"/>
<dbReference type="Proteomes" id="UP000001321">
    <property type="component" value="Chromosome"/>
</dbReference>
<dbReference type="GO" id="GO:0009328">
    <property type="term" value="C:phenylalanine-tRNA ligase complex"/>
    <property type="evidence" value="ECO:0007669"/>
    <property type="project" value="TreeGrafter"/>
</dbReference>
<dbReference type="GO" id="GO:0005524">
    <property type="term" value="F:ATP binding"/>
    <property type="evidence" value="ECO:0007669"/>
    <property type="project" value="UniProtKB-UniRule"/>
</dbReference>
<dbReference type="GO" id="GO:0000287">
    <property type="term" value="F:magnesium ion binding"/>
    <property type="evidence" value="ECO:0007669"/>
    <property type="project" value="InterPro"/>
</dbReference>
<dbReference type="GO" id="GO:0004826">
    <property type="term" value="F:phenylalanine-tRNA ligase activity"/>
    <property type="evidence" value="ECO:0007669"/>
    <property type="project" value="UniProtKB-UniRule"/>
</dbReference>
<dbReference type="GO" id="GO:0003723">
    <property type="term" value="F:RNA binding"/>
    <property type="evidence" value="ECO:0007669"/>
    <property type="project" value="InterPro"/>
</dbReference>
<dbReference type="GO" id="GO:0006432">
    <property type="term" value="P:phenylalanyl-tRNA aminoacylation"/>
    <property type="evidence" value="ECO:0007669"/>
    <property type="project" value="UniProtKB-UniRule"/>
</dbReference>
<dbReference type="CDD" id="cd00769">
    <property type="entry name" value="PheRS_beta_core"/>
    <property type="match status" value="1"/>
</dbReference>
<dbReference type="FunFam" id="3.30.56.10:FF:000011">
    <property type="entry name" value="Phenylalanine--tRNA ligase beta subunit"/>
    <property type="match status" value="1"/>
</dbReference>
<dbReference type="FunFam" id="3.50.40.10:FF:000003">
    <property type="entry name" value="Phenylalanine--tRNA ligase beta subunit"/>
    <property type="match status" value="1"/>
</dbReference>
<dbReference type="Gene3D" id="3.30.56.10">
    <property type="match status" value="2"/>
</dbReference>
<dbReference type="Gene3D" id="3.30.930.10">
    <property type="entry name" value="Bira Bifunctional Protein, Domain 2"/>
    <property type="match status" value="1"/>
</dbReference>
<dbReference type="Gene3D" id="3.50.40.10">
    <property type="entry name" value="Phenylalanyl-trna Synthetase, Chain B, domain 3"/>
    <property type="match status" value="1"/>
</dbReference>
<dbReference type="HAMAP" id="MF_00284">
    <property type="entry name" value="Phe_tRNA_synth_beta2"/>
    <property type="match status" value="1"/>
</dbReference>
<dbReference type="InterPro" id="IPR045864">
    <property type="entry name" value="aa-tRNA-synth_II/BPL/LPL"/>
</dbReference>
<dbReference type="InterPro" id="IPR005146">
    <property type="entry name" value="B3/B4_tRNA-bd"/>
</dbReference>
<dbReference type="InterPro" id="IPR009061">
    <property type="entry name" value="DNA-bd_dom_put_sf"/>
</dbReference>
<dbReference type="InterPro" id="IPR045060">
    <property type="entry name" value="Phe-tRNA-ligase_IIc_bsu"/>
</dbReference>
<dbReference type="InterPro" id="IPR004531">
    <property type="entry name" value="Phe-tRNA-synth_IIc_bsu_arc_euk"/>
</dbReference>
<dbReference type="InterPro" id="IPR020825">
    <property type="entry name" value="Phe-tRNA_synthase-like_B3/B4"/>
</dbReference>
<dbReference type="InterPro" id="IPR022918">
    <property type="entry name" value="Phe_tRNA_ligase_beta2_arc"/>
</dbReference>
<dbReference type="InterPro" id="IPR041616">
    <property type="entry name" value="PheRS_beta_core"/>
</dbReference>
<dbReference type="InterPro" id="IPR005147">
    <property type="entry name" value="tRNA_synthase_B5-dom"/>
</dbReference>
<dbReference type="NCBIfam" id="TIGR00471">
    <property type="entry name" value="pheT_arch"/>
    <property type="match status" value="1"/>
</dbReference>
<dbReference type="PANTHER" id="PTHR10947:SF0">
    <property type="entry name" value="PHENYLALANINE--TRNA LIGASE BETA SUBUNIT"/>
    <property type="match status" value="1"/>
</dbReference>
<dbReference type="PANTHER" id="PTHR10947">
    <property type="entry name" value="PHENYLALANYL-TRNA SYNTHETASE BETA CHAIN AND LEUCINE-RICH REPEAT-CONTAINING PROTEIN 47"/>
    <property type="match status" value="1"/>
</dbReference>
<dbReference type="Pfam" id="PF03484">
    <property type="entry name" value="B5"/>
    <property type="match status" value="1"/>
</dbReference>
<dbReference type="Pfam" id="PF17759">
    <property type="entry name" value="tRNA_synthFbeta"/>
    <property type="match status" value="1"/>
</dbReference>
<dbReference type="SMART" id="SM00873">
    <property type="entry name" value="B3_4"/>
    <property type="match status" value="1"/>
</dbReference>
<dbReference type="SMART" id="SM00874">
    <property type="entry name" value="B5"/>
    <property type="match status" value="1"/>
</dbReference>
<dbReference type="SUPFAM" id="SSF55681">
    <property type="entry name" value="Class II aaRS and biotin synthetases"/>
    <property type="match status" value="1"/>
</dbReference>
<dbReference type="SUPFAM" id="SSF46955">
    <property type="entry name" value="Putative DNA-binding domain"/>
    <property type="match status" value="2"/>
</dbReference>
<dbReference type="PROSITE" id="PS51483">
    <property type="entry name" value="B5"/>
    <property type="match status" value="1"/>
</dbReference>
<accession>B0R807</accession>
<proteinExistence type="inferred from homology"/>
<name>SYFB_HALS3</name>
<feature type="chain" id="PRO_1000114943" description="Phenylalanine--tRNA ligase beta subunit">
    <location>
        <begin position="1"/>
        <end position="567"/>
    </location>
</feature>
<feature type="domain" description="B5" evidence="1">
    <location>
        <begin position="284"/>
        <end position="359"/>
    </location>
</feature>
<feature type="binding site" evidence="1">
    <location>
        <position position="337"/>
    </location>
    <ligand>
        <name>Mg(2+)</name>
        <dbReference type="ChEBI" id="CHEBI:18420"/>
        <note>shared with alpha subunit</note>
    </ligand>
</feature>
<feature type="binding site" evidence="1">
    <location>
        <position position="343"/>
    </location>
    <ligand>
        <name>Mg(2+)</name>
        <dbReference type="ChEBI" id="CHEBI:18420"/>
        <note>shared with alpha subunit</note>
    </ligand>
</feature>
<feature type="binding site" evidence="1">
    <location>
        <position position="346"/>
    </location>
    <ligand>
        <name>Mg(2+)</name>
        <dbReference type="ChEBI" id="CHEBI:18420"/>
        <note>shared with alpha subunit</note>
    </ligand>
</feature>
<feature type="binding site" evidence="1">
    <location>
        <position position="347"/>
    </location>
    <ligand>
        <name>Mg(2+)</name>
        <dbReference type="ChEBI" id="CHEBI:18420"/>
        <note>shared with alpha subunit</note>
    </ligand>
</feature>
<evidence type="ECO:0000255" key="1">
    <source>
        <dbReference type="HAMAP-Rule" id="MF_00284"/>
    </source>
</evidence>
<sequence length="567" mass="62365">MPVVDIDPDELRRLTGHRSKDDDELRQDLFGLGIEYEGETEDGDFKLEFEADRLDRLSVEGIARSLRYHAGDDRGVDIPDTNAPEWAIDVTDVPADRPYVTGAVIRGVDLDADALDSLIQLQEKLHATMGRKRAKGAIGIHDLAMLKGDTVDGDGTAARSLTYTGIDPDGDTFVPLDDDAERTPADVLTEHPTGETYADLLADHDTYPAIYDDIGLFSFPPVINGRRTEVTTDSRELFVELTGTDQWTIDRMCAIICYALDARGATIEDVTVDYPDRELHRPDFAVRTKHVSHDRIETLLGVEFTTEAVVDLAERAGLDATPTDDGYDVEIPPYRVDVRHPVDVVDDLGRAYDFNDLTPRYPDVNTIGGRTESSRLERSVRQALVGLGFEDLLNFNMTSEAENFDRMRLTPDHDAVGAAQPATIAEPYSQDFTILRTWALPSLAMVLETNTHHAYPQDLAEVGFAAHADGDTQTGVAERRTVAAVLARNDASYEDAKARLQALCDEFAVALETPPTTHPSFIDGRAATIEIDGQPAGVIGELHPGVIVEHDVEVPVAGFEFELDALR</sequence>
<organism>
    <name type="scientific">Halobacterium salinarum (strain ATCC 29341 / DSM 671 / R1)</name>
    <dbReference type="NCBI Taxonomy" id="478009"/>
    <lineage>
        <taxon>Archaea</taxon>
        <taxon>Methanobacteriati</taxon>
        <taxon>Methanobacteriota</taxon>
        <taxon>Stenosarchaea group</taxon>
        <taxon>Halobacteria</taxon>
        <taxon>Halobacteriales</taxon>
        <taxon>Halobacteriaceae</taxon>
        <taxon>Halobacterium</taxon>
        <taxon>Halobacterium salinarum NRC-34001</taxon>
    </lineage>
</organism>